<evidence type="ECO:0000250" key="1">
    <source>
        <dbReference type="UniProtKB" id="P47057"/>
    </source>
</evidence>
<evidence type="ECO:0000250" key="2">
    <source>
        <dbReference type="UniProtKB" id="Q3UR97"/>
    </source>
</evidence>
<evidence type="ECO:0000250" key="3">
    <source>
        <dbReference type="UniProtKB" id="Q6P4T1"/>
    </source>
</evidence>
<evidence type="ECO:0000250" key="4">
    <source>
        <dbReference type="UniProtKB" id="Q96L94"/>
    </source>
</evidence>
<evidence type="ECO:0000255" key="5"/>
<evidence type="ECO:0000255" key="6">
    <source>
        <dbReference type="PROSITE-ProRule" id="PRU00147"/>
    </source>
</evidence>
<evidence type="ECO:0000256" key="7">
    <source>
        <dbReference type="SAM" id="MobiDB-lite"/>
    </source>
</evidence>
<evidence type="ECO:0000305" key="8"/>
<dbReference type="EMBL" id="CR382133">
    <property type="protein sequence ID" value="CAG84372.2"/>
    <property type="molecule type" value="Genomic_DNA"/>
</dbReference>
<dbReference type="RefSeq" id="XP_456420.2">
    <property type="nucleotide sequence ID" value="XM_456420.1"/>
</dbReference>
<dbReference type="FunCoup" id="Q6BZE9">
    <property type="interactions" value="539"/>
</dbReference>
<dbReference type="STRING" id="284592.Q6BZE9"/>
<dbReference type="GeneID" id="2899618"/>
<dbReference type="KEGG" id="dha:DEHA2A01892g"/>
<dbReference type="VEuPathDB" id="FungiDB:DEHA2A01892g"/>
<dbReference type="eggNOG" id="KOG2273">
    <property type="taxonomic scope" value="Eukaryota"/>
</dbReference>
<dbReference type="HOGENOM" id="CLU_027221_1_0_1"/>
<dbReference type="InParanoid" id="Q6BZE9"/>
<dbReference type="OMA" id="WSLHRFI"/>
<dbReference type="OrthoDB" id="205639at2759"/>
<dbReference type="Proteomes" id="UP000000599">
    <property type="component" value="Chromosome A"/>
</dbReference>
<dbReference type="GO" id="GO:0005829">
    <property type="term" value="C:cytosol"/>
    <property type="evidence" value="ECO:0007669"/>
    <property type="project" value="UniProtKB-SubCell"/>
</dbReference>
<dbReference type="GO" id="GO:0005769">
    <property type="term" value="C:early endosome"/>
    <property type="evidence" value="ECO:0007669"/>
    <property type="project" value="TreeGrafter"/>
</dbReference>
<dbReference type="GO" id="GO:0010008">
    <property type="term" value="C:endosome membrane"/>
    <property type="evidence" value="ECO:0007669"/>
    <property type="project" value="UniProtKB-SubCell"/>
</dbReference>
<dbReference type="GO" id="GO:0034045">
    <property type="term" value="C:phagophore assembly site membrane"/>
    <property type="evidence" value="ECO:0007669"/>
    <property type="project" value="UniProtKB-SubCell"/>
</dbReference>
<dbReference type="GO" id="GO:0035091">
    <property type="term" value="F:phosphatidylinositol binding"/>
    <property type="evidence" value="ECO:0007669"/>
    <property type="project" value="InterPro"/>
</dbReference>
<dbReference type="GO" id="GO:0000422">
    <property type="term" value="P:autophagy of mitochondrion"/>
    <property type="evidence" value="ECO:0007669"/>
    <property type="project" value="TreeGrafter"/>
</dbReference>
<dbReference type="GO" id="GO:0032456">
    <property type="term" value="P:endocytic recycling"/>
    <property type="evidence" value="ECO:0007669"/>
    <property type="project" value="TreeGrafter"/>
</dbReference>
<dbReference type="GO" id="GO:0034727">
    <property type="term" value="P:piecemeal microautophagy of the nucleus"/>
    <property type="evidence" value="ECO:0007669"/>
    <property type="project" value="TreeGrafter"/>
</dbReference>
<dbReference type="GO" id="GO:0015031">
    <property type="term" value="P:protein transport"/>
    <property type="evidence" value="ECO:0007669"/>
    <property type="project" value="UniProtKB-KW"/>
</dbReference>
<dbReference type="GO" id="GO:0061709">
    <property type="term" value="P:reticulophagy"/>
    <property type="evidence" value="ECO:0007669"/>
    <property type="project" value="TreeGrafter"/>
</dbReference>
<dbReference type="CDD" id="cd07628">
    <property type="entry name" value="BAR_Atg24p"/>
    <property type="match status" value="1"/>
</dbReference>
<dbReference type="CDD" id="cd06863">
    <property type="entry name" value="PX_Atg24p"/>
    <property type="match status" value="1"/>
</dbReference>
<dbReference type="Gene3D" id="1.20.1270.60">
    <property type="entry name" value="Arfaptin homology (AH) domain/BAR domain"/>
    <property type="match status" value="1"/>
</dbReference>
<dbReference type="Gene3D" id="3.30.1520.10">
    <property type="entry name" value="Phox-like domain"/>
    <property type="match status" value="1"/>
</dbReference>
<dbReference type="InterPro" id="IPR027267">
    <property type="entry name" value="AH/BAR_dom_sf"/>
</dbReference>
<dbReference type="InterPro" id="IPR001683">
    <property type="entry name" value="PX_dom"/>
</dbReference>
<dbReference type="InterPro" id="IPR036871">
    <property type="entry name" value="PX_dom_sf"/>
</dbReference>
<dbReference type="PANTHER" id="PTHR45949">
    <property type="entry name" value="SORTING NEXIN-4"/>
    <property type="match status" value="1"/>
</dbReference>
<dbReference type="PANTHER" id="PTHR45949:SF2">
    <property type="entry name" value="SORTING NEXIN-4"/>
    <property type="match status" value="1"/>
</dbReference>
<dbReference type="Pfam" id="PF00787">
    <property type="entry name" value="PX"/>
    <property type="match status" value="1"/>
</dbReference>
<dbReference type="SMART" id="SM00312">
    <property type="entry name" value="PX"/>
    <property type="match status" value="1"/>
</dbReference>
<dbReference type="SUPFAM" id="SSF64268">
    <property type="entry name" value="PX domain"/>
    <property type="match status" value="1"/>
</dbReference>
<dbReference type="PROSITE" id="PS50195">
    <property type="entry name" value="PX"/>
    <property type="match status" value="1"/>
</dbReference>
<organism>
    <name type="scientific">Debaryomyces hansenii (strain ATCC 36239 / CBS 767 / BCRC 21394 / JCM 1990 / NBRC 0083 / IGC 2968)</name>
    <name type="common">Yeast</name>
    <name type="synonym">Torulaspora hansenii</name>
    <dbReference type="NCBI Taxonomy" id="284592"/>
    <lineage>
        <taxon>Eukaryota</taxon>
        <taxon>Fungi</taxon>
        <taxon>Dikarya</taxon>
        <taxon>Ascomycota</taxon>
        <taxon>Saccharomycotina</taxon>
        <taxon>Pichiomycetes</taxon>
        <taxon>Debaryomycetaceae</taxon>
        <taxon>Debaryomyces</taxon>
    </lineage>
</organism>
<reference key="1">
    <citation type="journal article" date="2004" name="Nature">
        <title>Genome evolution in yeasts.</title>
        <authorList>
            <person name="Dujon B."/>
            <person name="Sherman D."/>
            <person name="Fischer G."/>
            <person name="Durrens P."/>
            <person name="Casaregola S."/>
            <person name="Lafontaine I."/>
            <person name="de Montigny J."/>
            <person name="Marck C."/>
            <person name="Neuveglise C."/>
            <person name="Talla E."/>
            <person name="Goffard N."/>
            <person name="Frangeul L."/>
            <person name="Aigle M."/>
            <person name="Anthouard V."/>
            <person name="Babour A."/>
            <person name="Barbe V."/>
            <person name="Barnay S."/>
            <person name="Blanchin S."/>
            <person name="Beckerich J.-M."/>
            <person name="Beyne E."/>
            <person name="Bleykasten C."/>
            <person name="Boisrame A."/>
            <person name="Boyer J."/>
            <person name="Cattolico L."/>
            <person name="Confanioleri F."/>
            <person name="de Daruvar A."/>
            <person name="Despons L."/>
            <person name="Fabre E."/>
            <person name="Fairhead C."/>
            <person name="Ferry-Dumazet H."/>
            <person name="Groppi A."/>
            <person name="Hantraye F."/>
            <person name="Hennequin C."/>
            <person name="Jauniaux N."/>
            <person name="Joyet P."/>
            <person name="Kachouri R."/>
            <person name="Kerrest A."/>
            <person name="Koszul R."/>
            <person name="Lemaire M."/>
            <person name="Lesur I."/>
            <person name="Ma L."/>
            <person name="Muller H."/>
            <person name="Nicaud J.-M."/>
            <person name="Nikolski M."/>
            <person name="Oztas S."/>
            <person name="Ozier-Kalogeropoulos O."/>
            <person name="Pellenz S."/>
            <person name="Potier S."/>
            <person name="Richard G.-F."/>
            <person name="Straub M.-L."/>
            <person name="Suleau A."/>
            <person name="Swennen D."/>
            <person name="Tekaia F."/>
            <person name="Wesolowski-Louvel M."/>
            <person name="Westhof E."/>
            <person name="Wirth B."/>
            <person name="Zeniou-Meyer M."/>
            <person name="Zivanovic Y."/>
            <person name="Bolotin-Fukuhara M."/>
            <person name="Thierry A."/>
            <person name="Bouchier C."/>
            <person name="Caudron B."/>
            <person name="Scarpelli C."/>
            <person name="Gaillardin C."/>
            <person name="Weissenbach J."/>
            <person name="Wincker P."/>
            <person name="Souciet J.-L."/>
        </authorList>
    </citation>
    <scope>NUCLEOTIDE SEQUENCE [LARGE SCALE GENOMIC DNA]</scope>
    <source>
        <strain>ATCC 36239 / CBS 767 / BCRC 21394 / JCM 1990 / NBRC 0083 / IGC 2968</strain>
    </source>
</reference>
<comment type="function">
    <text evidence="1">Sorting nexin, involved in the separation or division of vacuoles throughout the entire life cycle of the cells. Involved in retrieval of late-Golgi SNAREs from post-Golgi endosomes to the trans-Golgi network, for cytoplasm to vacuole transport (Cvt), and autophagy of large cargos including mitophagy, pexophagy and glycophagy.</text>
</comment>
<comment type="subcellular location">
    <subcellularLocation>
        <location evidence="1">Cytoplasm</location>
        <location evidence="1">Cytosol</location>
    </subcellularLocation>
    <subcellularLocation>
        <location evidence="1">Preautophagosomal structure membrane</location>
        <topology evidence="1">Peripheral membrane protein</topology>
    </subcellularLocation>
    <subcellularLocation>
        <location evidence="1">Endosome membrane</location>
        <topology evidence="1">Peripheral membrane protein</topology>
    </subcellularLocation>
    <text evidence="1">Endosome and other perivacuolar punctate structures. Associates to phosphatidylinositol 3-phosphate, necessary for peripheral membrane localization to the perivacuolar punctate structures.</text>
</comment>
<comment type="domain">
    <text evidence="4">The PX domain binds phosphatidylinositol 3-phosphate which is necessary for peripheral membrane localization to the perivacuolar punctate structures.</text>
</comment>
<comment type="similarity">
    <text evidence="8">Belongs to the sorting nexin family.</text>
</comment>
<name>SNX4_DEBHA</name>
<gene>
    <name type="primary">SNX4</name>
    <name type="synonym">ATG24</name>
    <name type="ordered locus">DEHA2A01892g</name>
</gene>
<protein>
    <recommendedName>
        <fullName>Sorting nexin-4</fullName>
    </recommendedName>
    <alternativeName>
        <fullName>Autophagy-related protein 24</fullName>
    </alternativeName>
</protein>
<proteinExistence type="inferred from homology"/>
<accession>Q6BZE9</accession>
<feature type="chain" id="PRO_0000213811" description="Sorting nexin-4">
    <location>
        <begin position="1"/>
        <end position="582"/>
    </location>
</feature>
<feature type="domain" description="PX" evidence="6">
    <location>
        <begin position="116"/>
        <end position="249"/>
    </location>
</feature>
<feature type="region of interest" description="Disordered" evidence="7">
    <location>
        <begin position="1"/>
        <end position="111"/>
    </location>
</feature>
<feature type="coiled-coil region" evidence="5">
    <location>
        <begin position="300"/>
        <end position="329"/>
    </location>
</feature>
<feature type="coiled-coil region" evidence="5">
    <location>
        <begin position="494"/>
        <end position="529"/>
    </location>
</feature>
<feature type="compositionally biased region" description="Polar residues" evidence="7">
    <location>
        <begin position="1"/>
        <end position="11"/>
    </location>
</feature>
<feature type="compositionally biased region" description="Basic and acidic residues" evidence="7">
    <location>
        <begin position="12"/>
        <end position="27"/>
    </location>
</feature>
<feature type="compositionally biased region" description="Basic and acidic residues" evidence="7">
    <location>
        <begin position="35"/>
        <end position="54"/>
    </location>
</feature>
<feature type="compositionally biased region" description="Acidic residues" evidence="7">
    <location>
        <begin position="57"/>
        <end position="70"/>
    </location>
</feature>
<feature type="binding site" evidence="2">
    <location>
        <position position="171"/>
    </location>
    <ligand>
        <name>a 1,2-diacyl-sn-glycero-3-phospho-(1D-myo-inositol-3-phosphate)</name>
        <dbReference type="ChEBI" id="CHEBI:58088"/>
    </ligand>
</feature>
<feature type="binding site" evidence="4">
    <location>
        <position position="197"/>
    </location>
    <ligand>
        <name>a 1,2-diacyl-sn-glycero-3-phospho-(1D-myo-inositol-3-phosphate)</name>
        <dbReference type="ChEBI" id="CHEBI:58088"/>
    </ligand>
</feature>
<feature type="binding site" evidence="3">
    <location>
        <position position="216"/>
    </location>
    <ligand>
        <name>a 1,2-diacyl-sn-glycero-3-phospho-(1D-myo-inositol-3-phosphate)</name>
        <dbReference type="ChEBI" id="CHEBI:58088"/>
    </ligand>
</feature>
<keyword id="KW-0072">Autophagy</keyword>
<keyword id="KW-0175">Coiled coil</keyword>
<keyword id="KW-0963">Cytoplasm</keyword>
<keyword id="KW-0967">Endosome</keyword>
<keyword id="KW-0446">Lipid-binding</keyword>
<keyword id="KW-0472">Membrane</keyword>
<keyword id="KW-0653">Protein transport</keyword>
<keyword id="KW-1185">Reference proteome</keyword>
<keyword id="KW-0813">Transport</keyword>
<sequence>MSSDDQFTSIQWDRDELGPNKETKVNKQETITEDDEHHNNDNEDKDNDTTKSNEPENIQEDDETKDDNEPTDSLILSKTGDENISNIESQNEGDHIVGEPDVNQEPSSDSQTEAYEINVVVTSPLRDLDSSSKPYISYLLTTATNHPSVMKLSTVKKEQGKEVVEITARRRYGDFRFLFDCLSNDHPEVMMPPLPSKSNFKYLTGDTFSTEFVHKRLHSLDRFVRFITCHKVLSQSSIFHLFVSDSADWSTFQKNLKISKVGVQESDADKGNSSMTSNVVNKVVNEDLLTETIMNFLTPSKHKRETNKEILEISDKLKKLYENLIKLDKIFTKLNKKNHDLSVDYEQFSQQIMKLSVIQNSSDETNEPTTPEINEQKQFATNFKVFASSLSYFSDNWSNLHKYIDESFLVSLKDCAKYIISLTNLIELQHNKKIDLQVLQDYLNKAKSELQGLGGSHNAPPNPIITHNNGGIVNNTTQLIRDTLSTSATPNIGSSVTESKVTKLQNRITELENEISVQSQLVLDLTNKIINEEYPNWDKFNKIELKESLLGLCNEEISFYKGLVDNWSDIELKLLKRLDELK</sequence>